<dbReference type="EC" id="3.1.26.4" evidence="1"/>
<dbReference type="EMBL" id="CU458896">
    <property type="protein sequence ID" value="CAM63298.1"/>
    <property type="molecule type" value="Genomic_DNA"/>
</dbReference>
<dbReference type="RefSeq" id="WP_005087713.1">
    <property type="nucleotide sequence ID" value="NZ_MLCG01000001.1"/>
</dbReference>
<dbReference type="SMR" id="B1MDH9"/>
<dbReference type="GeneID" id="93380153"/>
<dbReference type="KEGG" id="mab:MAB_3222c"/>
<dbReference type="Proteomes" id="UP000007137">
    <property type="component" value="Chromosome"/>
</dbReference>
<dbReference type="GO" id="GO:0005737">
    <property type="term" value="C:cytoplasm"/>
    <property type="evidence" value="ECO:0007669"/>
    <property type="project" value="UniProtKB-SubCell"/>
</dbReference>
<dbReference type="GO" id="GO:0032299">
    <property type="term" value="C:ribonuclease H2 complex"/>
    <property type="evidence" value="ECO:0007669"/>
    <property type="project" value="TreeGrafter"/>
</dbReference>
<dbReference type="GO" id="GO:0030145">
    <property type="term" value="F:manganese ion binding"/>
    <property type="evidence" value="ECO:0007669"/>
    <property type="project" value="UniProtKB-UniRule"/>
</dbReference>
<dbReference type="GO" id="GO:0003723">
    <property type="term" value="F:RNA binding"/>
    <property type="evidence" value="ECO:0007669"/>
    <property type="project" value="InterPro"/>
</dbReference>
<dbReference type="GO" id="GO:0004523">
    <property type="term" value="F:RNA-DNA hybrid ribonuclease activity"/>
    <property type="evidence" value="ECO:0007669"/>
    <property type="project" value="UniProtKB-UniRule"/>
</dbReference>
<dbReference type="GO" id="GO:0043137">
    <property type="term" value="P:DNA replication, removal of RNA primer"/>
    <property type="evidence" value="ECO:0007669"/>
    <property type="project" value="TreeGrafter"/>
</dbReference>
<dbReference type="GO" id="GO:0006298">
    <property type="term" value="P:mismatch repair"/>
    <property type="evidence" value="ECO:0007669"/>
    <property type="project" value="TreeGrafter"/>
</dbReference>
<dbReference type="CDD" id="cd07182">
    <property type="entry name" value="RNase_HII_bacteria_HII_like"/>
    <property type="match status" value="1"/>
</dbReference>
<dbReference type="FunFam" id="3.30.420.10:FF:000113">
    <property type="entry name" value="Ribonuclease HII"/>
    <property type="match status" value="1"/>
</dbReference>
<dbReference type="Gene3D" id="3.30.420.10">
    <property type="entry name" value="Ribonuclease H-like superfamily/Ribonuclease H"/>
    <property type="match status" value="1"/>
</dbReference>
<dbReference type="HAMAP" id="MF_00052_B">
    <property type="entry name" value="RNase_HII_B"/>
    <property type="match status" value="1"/>
</dbReference>
<dbReference type="InterPro" id="IPR022898">
    <property type="entry name" value="RNase_HII"/>
</dbReference>
<dbReference type="InterPro" id="IPR001352">
    <property type="entry name" value="RNase_HII/HIII"/>
</dbReference>
<dbReference type="InterPro" id="IPR024567">
    <property type="entry name" value="RNase_HII/HIII_dom"/>
</dbReference>
<dbReference type="InterPro" id="IPR012337">
    <property type="entry name" value="RNaseH-like_sf"/>
</dbReference>
<dbReference type="InterPro" id="IPR036397">
    <property type="entry name" value="RNaseH_sf"/>
</dbReference>
<dbReference type="NCBIfam" id="NF000595">
    <property type="entry name" value="PRK00015.1-3"/>
    <property type="match status" value="1"/>
</dbReference>
<dbReference type="NCBIfam" id="NF000598">
    <property type="entry name" value="PRK00015.2-2"/>
    <property type="match status" value="1"/>
</dbReference>
<dbReference type="NCBIfam" id="NF000600">
    <property type="entry name" value="PRK00015.2-4"/>
    <property type="match status" value="1"/>
</dbReference>
<dbReference type="PANTHER" id="PTHR10954">
    <property type="entry name" value="RIBONUCLEASE H2 SUBUNIT A"/>
    <property type="match status" value="1"/>
</dbReference>
<dbReference type="PANTHER" id="PTHR10954:SF18">
    <property type="entry name" value="RIBONUCLEASE HII"/>
    <property type="match status" value="1"/>
</dbReference>
<dbReference type="Pfam" id="PF01351">
    <property type="entry name" value="RNase_HII"/>
    <property type="match status" value="1"/>
</dbReference>
<dbReference type="SUPFAM" id="SSF53098">
    <property type="entry name" value="Ribonuclease H-like"/>
    <property type="match status" value="1"/>
</dbReference>
<dbReference type="PROSITE" id="PS51975">
    <property type="entry name" value="RNASE_H_2"/>
    <property type="match status" value="1"/>
</dbReference>
<feature type="chain" id="PRO_1000091635" description="Ribonuclease HII">
    <location>
        <begin position="1"/>
        <end position="234"/>
    </location>
</feature>
<feature type="domain" description="RNase H type-2" evidence="2">
    <location>
        <begin position="30"/>
        <end position="221"/>
    </location>
</feature>
<feature type="binding site" evidence="1">
    <location>
        <position position="36"/>
    </location>
    <ligand>
        <name>a divalent metal cation</name>
        <dbReference type="ChEBI" id="CHEBI:60240"/>
    </ligand>
</feature>
<feature type="binding site" evidence="1">
    <location>
        <position position="37"/>
    </location>
    <ligand>
        <name>a divalent metal cation</name>
        <dbReference type="ChEBI" id="CHEBI:60240"/>
    </ligand>
</feature>
<feature type="binding site" evidence="1">
    <location>
        <position position="130"/>
    </location>
    <ligand>
        <name>a divalent metal cation</name>
        <dbReference type="ChEBI" id="CHEBI:60240"/>
    </ligand>
</feature>
<protein>
    <recommendedName>
        <fullName evidence="1">Ribonuclease HII</fullName>
        <shortName evidence="1">RNase HII</shortName>
        <ecNumber evidence="1">3.1.26.4</ecNumber>
    </recommendedName>
</protein>
<accession>B1MDH9</accession>
<keyword id="KW-0963">Cytoplasm</keyword>
<keyword id="KW-0255">Endonuclease</keyword>
<keyword id="KW-0378">Hydrolase</keyword>
<keyword id="KW-0464">Manganese</keyword>
<keyword id="KW-0479">Metal-binding</keyword>
<keyword id="KW-0540">Nuclease</keyword>
<keyword id="KW-1185">Reference proteome</keyword>
<proteinExistence type="inferred from homology"/>
<name>RNH2_MYCA9</name>
<evidence type="ECO:0000255" key="1">
    <source>
        <dbReference type="HAMAP-Rule" id="MF_00052"/>
    </source>
</evidence>
<evidence type="ECO:0000255" key="2">
    <source>
        <dbReference type="PROSITE-ProRule" id="PRU01319"/>
    </source>
</evidence>
<gene>
    <name evidence="1" type="primary">rnhB</name>
    <name type="ordered locus">MAB_3222c</name>
</gene>
<organism>
    <name type="scientific">Mycobacteroides abscessus (strain ATCC 19977 / DSM 44196 / CCUG 20993 / CIP 104536 / JCM 13569 / NCTC 13031 / TMC 1543 / L948)</name>
    <name type="common">Mycobacterium abscessus</name>
    <dbReference type="NCBI Taxonomy" id="561007"/>
    <lineage>
        <taxon>Bacteria</taxon>
        <taxon>Bacillati</taxon>
        <taxon>Actinomycetota</taxon>
        <taxon>Actinomycetes</taxon>
        <taxon>Mycobacteriales</taxon>
        <taxon>Mycobacteriaceae</taxon>
        <taxon>Mycobacteroides</taxon>
        <taxon>Mycobacteroides abscessus</taxon>
    </lineage>
</organism>
<sequence>MSTSWPPRTVIRKASGLRTLELTLDRVGLGPVAGVDEAGRGACAGPLVIAACVLGSNQRKSLAALNDSKKLTEKMRETLFPLICRYAEAYHVVSVPADEVDRIGVHVANIEGMRRAVAGLGVKPGYVLTDGFRVPGLPVPSLPVIGGDASAACIAAASVLAKVSRDRVMVNMDSDHPGYGFAVHKGYSTAVHTEALRRLGPSAQHRQSFVNVRNAAMGSSLMRPLAPRESDTGG</sequence>
<comment type="function">
    <text evidence="1">Endonuclease that specifically degrades the RNA of RNA-DNA hybrids.</text>
</comment>
<comment type="catalytic activity">
    <reaction evidence="1">
        <text>Endonucleolytic cleavage to 5'-phosphomonoester.</text>
        <dbReference type="EC" id="3.1.26.4"/>
    </reaction>
</comment>
<comment type="cofactor">
    <cofactor evidence="1">
        <name>Mn(2+)</name>
        <dbReference type="ChEBI" id="CHEBI:29035"/>
    </cofactor>
    <cofactor evidence="1">
        <name>Mg(2+)</name>
        <dbReference type="ChEBI" id="CHEBI:18420"/>
    </cofactor>
    <text evidence="1">Manganese or magnesium. Binds 1 divalent metal ion per monomer in the absence of substrate. May bind a second metal ion after substrate binding.</text>
</comment>
<comment type="subcellular location">
    <subcellularLocation>
        <location evidence="1">Cytoplasm</location>
    </subcellularLocation>
</comment>
<comment type="similarity">
    <text evidence="1">Belongs to the RNase HII family.</text>
</comment>
<reference key="1">
    <citation type="journal article" date="2009" name="PLoS ONE">
        <title>Non mycobacterial virulence genes in the genome of the emerging pathogen Mycobacterium abscessus.</title>
        <authorList>
            <person name="Ripoll F."/>
            <person name="Pasek S."/>
            <person name="Schenowitz C."/>
            <person name="Dossat C."/>
            <person name="Barbe V."/>
            <person name="Rottman M."/>
            <person name="Macheras E."/>
            <person name="Heym B."/>
            <person name="Herrmann J.L."/>
            <person name="Daffe M."/>
            <person name="Brosch R."/>
            <person name="Risler J.L."/>
            <person name="Gaillard J.L."/>
        </authorList>
    </citation>
    <scope>NUCLEOTIDE SEQUENCE [LARGE SCALE GENOMIC DNA]</scope>
    <source>
        <strain>ATCC 19977 / DSM 44196 / CCUG 20993 / CIP 104536 / JCM 13569 / NCTC 13031 / TMC 1543 / L948</strain>
    </source>
</reference>